<organism>
    <name type="scientific">Dickeya dadantii (strain 3937)</name>
    <name type="common">Erwinia chrysanthemi (strain 3937)</name>
    <dbReference type="NCBI Taxonomy" id="198628"/>
    <lineage>
        <taxon>Bacteria</taxon>
        <taxon>Pseudomonadati</taxon>
        <taxon>Pseudomonadota</taxon>
        <taxon>Gammaproteobacteria</taxon>
        <taxon>Enterobacterales</taxon>
        <taxon>Pectobacteriaceae</taxon>
        <taxon>Dickeya</taxon>
    </lineage>
</organism>
<comment type="function">
    <text evidence="1">Is involved in NO detoxification in an aerobic process, termed nitric oxide dioxygenase (NOD) reaction that utilizes O(2) and NAD(P)H to convert NO to nitrate, which protects the bacterium from various noxious nitrogen compounds. Therefore, plays a central role in the inducible response to nitrosative stress (By similarity).</text>
</comment>
<comment type="catalytic activity">
    <reaction>
        <text>2 nitric oxide + NADPH + 2 O2 = 2 nitrate + NADP(+) + H(+)</text>
        <dbReference type="Rhea" id="RHEA:19465"/>
        <dbReference type="ChEBI" id="CHEBI:15378"/>
        <dbReference type="ChEBI" id="CHEBI:15379"/>
        <dbReference type="ChEBI" id="CHEBI:16480"/>
        <dbReference type="ChEBI" id="CHEBI:17632"/>
        <dbReference type="ChEBI" id="CHEBI:57783"/>
        <dbReference type="ChEBI" id="CHEBI:58349"/>
        <dbReference type="EC" id="1.14.12.17"/>
    </reaction>
</comment>
<comment type="catalytic activity">
    <reaction>
        <text>2 nitric oxide + NADH + 2 O2 = 2 nitrate + NAD(+) + H(+)</text>
        <dbReference type="Rhea" id="RHEA:19469"/>
        <dbReference type="ChEBI" id="CHEBI:15378"/>
        <dbReference type="ChEBI" id="CHEBI:15379"/>
        <dbReference type="ChEBI" id="CHEBI:16480"/>
        <dbReference type="ChEBI" id="CHEBI:17632"/>
        <dbReference type="ChEBI" id="CHEBI:57540"/>
        <dbReference type="ChEBI" id="CHEBI:57945"/>
        <dbReference type="EC" id="1.14.12.17"/>
    </reaction>
</comment>
<comment type="cofactor">
    <cofactor evidence="1">
        <name>heme b</name>
        <dbReference type="ChEBI" id="CHEBI:60344"/>
    </cofactor>
    <text evidence="1">Binds 1 heme b (iron(II)-protoporphyrin IX) group per subunit.</text>
</comment>
<comment type="cofactor">
    <cofactor evidence="1">
        <name>FAD</name>
        <dbReference type="ChEBI" id="CHEBI:57692"/>
    </cofactor>
    <text evidence="1">Binds 1 FAD per subunit.</text>
</comment>
<comment type="subcellular location">
    <subcellularLocation>
        <location>Cytoplasm</location>
    </subcellularLocation>
</comment>
<comment type="domain">
    <text>Consists of two distinct domains; an N-terminal heme-containing oxygen-binding domain and a C-terminal reductase domain with binding sites for FAD and NAD(P)H.</text>
</comment>
<comment type="similarity">
    <text evidence="3">Belongs to the globin family. Two-domain flavohemoproteins subfamily.</text>
</comment>
<comment type="similarity">
    <text evidence="3">In the C-terminal section; belongs to the flavoprotein pyridine nucleotide cytochrome reductase family.</text>
</comment>
<feature type="chain" id="PRO_0000052434" description="Flavohemoprotein">
    <location>
        <begin position="1"/>
        <end position="395"/>
    </location>
</feature>
<feature type="domain" description="Globin" evidence="2">
    <location>
        <begin position="1"/>
        <end position="136"/>
    </location>
</feature>
<feature type="domain" description="FAD-binding FR-type">
    <location>
        <begin position="150"/>
        <end position="255"/>
    </location>
</feature>
<feature type="region of interest" description="Reductase">
    <location>
        <begin position="147"/>
        <end position="395"/>
    </location>
</feature>
<feature type="active site" description="Charge relay system" evidence="1">
    <location>
        <position position="95"/>
    </location>
</feature>
<feature type="active site" description="Charge relay system" evidence="1">
    <location>
        <position position="135"/>
    </location>
</feature>
<feature type="binding site" description="proximal binding residue" evidence="1">
    <location>
        <position position="85"/>
    </location>
    <ligand>
        <name>heme b</name>
        <dbReference type="ChEBI" id="CHEBI:60344"/>
    </ligand>
    <ligandPart>
        <name>Fe</name>
        <dbReference type="ChEBI" id="CHEBI:18248"/>
    </ligandPart>
</feature>
<feature type="binding site" evidence="1">
    <location>
        <position position="188"/>
    </location>
    <ligand>
        <name>FAD</name>
        <dbReference type="ChEBI" id="CHEBI:57692"/>
    </ligand>
</feature>
<feature type="binding site" evidence="1">
    <location>
        <begin position="204"/>
        <end position="207"/>
    </location>
    <ligand>
        <name>FAD</name>
        <dbReference type="ChEBI" id="CHEBI:57692"/>
    </ligand>
</feature>
<feature type="binding site" evidence="1">
    <location>
        <begin position="268"/>
        <end position="273"/>
    </location>
    <ligand>
        <name>NADP(+)</name>
        <dbReference type="ChEBI" id="CHEBI:58349"/>
    </ligand>
</feature>
<feature type="binding site" evidence="1">
    <location>
        <begin position="388"/>
        <end position="391"/>
    </location>
    <ligand>
        <name>FAD</name>
        <dbReference type="ChEBI" id="CHEBI:57692"/>
    </ligand>
</feature>
<feature type="site" description="Involved in heme-bound ligand stabilization and O-O bond activation" evidence="1">
    <location>
        <position position="29"/>
    </location>
</feature>
<feature type="site" description="Influences the redox potential of the prosthetic heme and FAD groups" evidence="1">
    <location>
        <position position="84"/>
    </location>
</feature>
<feature type="site" description="Influences the redox potential of the prosthetic heme and FAD groups" evidence="1">
    <location>
        <position position="387"/>
    </location>
</feature>
<feature type="sequence conflict" description="In Ref. 1; CAA53500." evidence="3" ref="1">
    <original>A</original>
    <variation>R</variation>
    <location>
        <position position="123"/>
    </location>
</feature>
<name>HMP_DICD3</name>
<evidence type="ECO:0000250" key="1"/>
<evidence type="ECO:0000255" key="2">
    <source>
        <dbReference type="PROSITE-ProRule" id="PRU00238"/>
    </source>
</evidence>
<evidence type="ECO:0000305" key="3"/>
<gene>
    <name type="primary">hmp</name>
    <name type="synonym">hmpX</name>
    <name type="ordered locus">Dda3937_03368</name>
</gene>
<sequence>MLDQQTIATIKSTIPLLAETGPALTAHFYQRMFHHNPELKDIFNMSNQRNGDQREALFNAICAYATHIENLPALLPAVERIAQKHASFNIQPEQYQIVGTHLLATLEEMFQPGQAVLDAWGKAYGVLANVFIQRESDIYQQSAGQNGGWHGIRPFRIVAKQPQSSLITSFTLEPVDGGPIAAFRPGQYLAVYIRDKRFEYQEIRQYSLTNEPNGRYYRIAVKRETMGSVSGYLHDVAREGDVIELAAPHGDFYLEVTPETPVALISAGVGQTPMLSMLHSLKNQQHQADIFWLHAAENTEVHAFADEIADVAATLPQLQSYVWYREASSEAARSAHAFHGLMALKDLPTPLPMTNLHCYLCGPVAFMQFAARQLLELGITESQIHYECFGPHKVI</sequence>
<accession>Q47266</accession>
<accession>E0SAY9</accession>
<proteinExistence type="inferred from homology"/>
<dbReference type="EC" id="1.14.12.17"/>
<dbReference type="EMBL" id="X75893">
    <property type="protein sequence ID" value="CAA53500.1"/>
    <property type="molecule type" value="Genomic_DNA"/>
</dbReference>
<dbReference type="EMBL" id="CP002038">
    <property type="protein sequence ID" value="ADM99548.1"/>
    <property type="molecule type" value="Genomic_DNA"/>
</dbReference>
<dbReference type="PIR" id="S44277">
    <property type="entry name" value="S44277"/>
</dbReference>
<dbReference type="RefSeq" id="WP_013318979.1">
    <property type="nucleotide sequence ID" value="NC_014500.1"/>
</dbReference>
<dbReference type="SMR" id="Q47266"/>
<dbReference type="STRING" id="198628.Dda3937_03368"/>
<dbReference type="KEGG" id="ddd:Dda3937_03368"/>
<dbReference type="PATRIC" id="fig|198628.6.peg.3305"/>
<dbReference type="eggNOG" id="COG1017">
    <property type="taxonomic scope" value="Bacteria"/>
</dbReference>
<dbReference type="eggNOG" id="COG1018">
    <property type="taxonomic scope" value="Bacteria"/>
</dbReference>
<dbReference type="HOGENOM" id="CLU_003827_12_0_6"/>
<dbReference type="OrthoDB" id="9801223at2"/>
<dbReference type="Proteomes" id="UP000006859">
    <property type="component" value="Chromosome"/>
</dbReference>
<dbReference type="GO" id="GO:0005737">
    <property type="term" value="C:cytoplasm"/>
    <property type="evidence" value="ECO:0007669"/>
    <property type="project" value="UniProtKB-SubCell"/>
</dbReference>
<dbReference type="GO" id="GO:0071949">
    <property type="term" value="F:FAD binding"/>
    <property type="evidence" value="ECO:0007669"/>
    <property type="project" value="InterPro"/>
</dbReference>
<dbReference type="GO" id="GO:0020037">
    <property type="term" value="F:heme binding"/>
    <property type="evidence" value="ECO:0007669"/>
    <property type="project" value="InterPro"/>
</dbReference>
<dbReference type="GO" id="GO:0046872">
    <property type="term" value="F:metal ion binding"/>
    <property type="evidence" value="ECO:0007669"/>
    <property type="project" value="UniProtKB-KW"/>
</dbReference>
<dbReference type="GO" id="GO:0008941">
    <property type="term" value="F:nitric oxide dioxygenase NAD(P)H activity"/>
    <property type="evidence" value="ECO:0007669"/>
    <property type="project" value="UniProtKB-UniRule"/>
</dbReference>
<dbReference type="GO" id="GO:0019825">
    <property type="term" value="F:oxygen binding"/>
    <property type="evidence" value="ECO:0007669"/>
    <property type="project" value="InterPro"/>
</dbReference>
<dbReference type="GO" id="GO:0005344">
    <property type="term" value="F:oxygen carrier activity"/>
    <property type="evidence" value="ECO:0007669"/>
    <property type="project" value="UniProtKB-UniRule"/>
</dbReference>
<dbReference type="GO" id="GO:0071500">
    <property type="term" value="P:cellular response to nitrosative stress"/>
    <property type="evidence" value="ECO:0007669"/>
    <property type="project" value="TreeGrafter"/>
</dbReference>
<dbReference type="GO" id="GO:0046210">
    <property type="term" value="P:nitric oxide catabolic process"/>
    <property type="evidence" value="ECO:0007669"/>
    <property type="project" value="TreeGrafter"/>
</dbReference>
<dbReference type="GO" id="GO:0009636">
    <property type="term" value="P:response to toxic substance"/>
    <property type="evidence" value="ECO:0007669"/>
    <property type="project" value="UniProtKB-KW"/>
</dbReference>
<dbReference type="CDD" id="cd06184">
    <property type="entry name" value="flavohem_like_fad_nad_binding"/>
    <property type="match status" value="1"/>
</dbReference>
<dbReference type="CDD" id="cd14776">
    <property type="entry name" value="HmpEc-globin-like"/>
    <property type="match status" value="1"/>
</dbReference>
<dbReference type="FunFam" id="1.10.490.10:FF:000003">
    <property type="entry name" value="Flavohemoprotein"/>
    <property type="match status" value="1"/>
</dbReference>
<dbReference type="FunFam" id="2.40.30.10:FF:000034">
    <property type="entry name" value="Flavohemoprotein"/>
    <property type="match status" value="1"/>
</dbReference>
<dbReference type="FunFam" id="3.40.50.80:FF:000010">
    <property type="entry name" value="Flavohemoprotein"/>
    <property type="match status" value="1"/>
</dbReference>
<dbReference type="Gene3D" id="1.10.490.10">
    <property type="entry name" value="Globins"/>
    <property type="match status" value="1"/>
</dbReference>
<dbReference type="Gene3D" id="3.40.50.80">
    <property type="entry name" value="Nucleotide-binding domain of ferredoxin-NADP reductase (FNR) module"/>
    <property type="match status" value="1"/>
</dbReference>
<dbReference type="Gene3D" id="2.40.30.10">
    <property type="entry name" value="Translation factors"/>
    <property type="match status" value="1"/>
</dbReference>
<dbReference type="HAMAP" id="MF_01252">
    <property type="entry name" value="Hmp"/>
    <property type="match status" value="1"/>
</dbReference>
<dbReference type="InterPro" id="IPR008333">
    <property type="entry name" value="Cbr1-like_FAD-bd_dom"/>
</dbReference>
<dbReference type="InterPro" id="IPR017927">
    <property type="entry name" value="FAD-bd_FR_type"/>
</dbReference>
<dbReference type="InterPro" id="IPR001709">
    <property type="entry name" value="Flavoprot_Pyr_Nucl_cyt_Rdtase"/>
</dbReference>
<dbReference type="InterPro" id="IPR039261">
    <property type="entry name" value="FNR_nucleotide-bd"/>
</dbReference>
<dbReference type="InterPro" id="IPR000971">
    <property type="entry name" value="Globin"/>
</dbReference>
<dbReference type="InterPro" id="IPR009050">
    <property type="entry name" value="Globin-like_sf"/>
</dbReference>
<dbReference type="InterPro" id="IPR012292">
    <property type="entry name" value="Globin/Proto"/>
</dbReference>
<dbReference type="InterPro" id="IPR023950">
    <property type="entry name" value="Hmp"/>
</dbReference>
<dbReference type="InterPro" id="IPR001433">
    <property type="entry name" value="OxRdtase_FAD/NAD-bd"/>
</dbReference>
<dbReference type="InterPro" id="IPR017938">
    <property type="entry name" value="Riboflavin_synthase-like_b-brl"/>
</dbReference>
<dbReference type="NCBIfam" id="NF009805">
    <property type="entry name" value="PRK13289.1"/>
    <property type="match status" value="1"/>
</dbReference>
<dbReference type="PANTHER" id="PTHR43396">
    <property type="entry name" value="FLAVOHEMOPROTEIN"/>
    <property type="match status" value="1"/>
</dbReference>
<dbReference type="PANTHER" id="PTHR43396:SF3">
    <property type="entry name" value="FLAVOHEMOPROTEIN"/>
    <property type="match status" value="1"/>
</dbReference>
<dbReference type="Pfam" id="PF00970">
    <property type="entry name" value="FAD_binding_6"/>
    <property type="match status" value="1"/>
</dbReference>
<dbReference type="Pfam" id="PF00042">
    <property type="entry name" value="Globin"/>
    <property type="match status" value="1"/>
</dbReference>
<dbReference type="Pfam" id="PF00175">
    <property type="entry name" value="NAD_binding_1"/>
    <property type="match status" value="1"/>
</dbReference>
<dbReference type="PRINTS" id="PR00371">
    <property type="entry name" value="FPNCR"/>
</dbReference>
<dbReference type="PRINTS" id="PR00410">
    <property type="entry name" value="PHEHYDRXLASE"/>
</dbReference>
<dbReference type="SUPFAM" id="SSF52343">
    <property type="entry name" value="Ferredoxin reductase-like, C-terminal NADP-linked domain"/>
    <property type="match status" value="1"/>
</dbReference>
<dbReference type="SUPFAM" id="SSF46458">
    <property type="entry name" value="Globin-like"/>
    <property type="match status" value="1"/>
</dbReference>
<dbReference type="SUPFAM" id="SSF63380">
    <property type="entry name" value="Riboflavin synthase domain-like"/>
    <property type="match status" value="1"/>
</dbReference>
<dbReference type="PROSITE" id="PS51384">
    <property type="entry name" value="FAD_FR"/>
    <property type="match status" value="1"/>
</dbReference>
<dbReference type="PROSITE" id="PS01033">
    <property type="entry name" value="GLOBIN"/>
    <property type="match status" value="1"/>
</dbReference>
<keyword id="KW-0963">Cytoplasm</keyword>
<keyword id="KW-0216">Detoxification</keyword>
<keyword id="KW-0274">FAD</keyword>
<keyword id="KW-0285">Flavoprotein</keyword>
<keyword id="KW-0349">Heme</keyword>
<keyword id="KW-0408">Iron</keyword>
<keyword id="KW-0479">Metal-binding</keyword>
<keyword id="KW-0520">NAD</keyword>
<keyword id="KW-0521">NADP</keyword>
<keyword id="KW-0560">Oxidoreductase</keyword>
<keyword id="KW-0561">Oxygen transport</keyword>
<keyword id="KW-1185">Reference proteome</keyword>
<keyword id="KW-0813">Transport</keyword>
<protein>
    <recommendedName>
        <fullName>Flavohemoprotein</fullName>
    </recommendedName>
    <alternativeName>
        <fullName>Flavohemoglobin</fullName>
    </alternativeName>
    <alternativeName>
        <fullName>Hemoglobin-like protein</fullName>
    </alternativeName>
    <alternativeName>
        <fullName>Hemoprotein X</fullName>
    </alternativeName>
    <alternativeName>
        <fullName>Nitric oxide dioxygenase</fullName>
        <shortName>NO oxygenase</shortName>
        <shortName>NOD</shortName>
        <ecNumber>1.14.12.17</ecNumber>
    </alternativeName>
</protein>
<reference key="1">
    <citation type="journal article" date="1995" name="Microbiology">
        <title>Flavohaemoglobin HmpX: a new pathogenicity determinant in Erwinia chrysanthemi strain 3937.</title>
        <authorList>
            <person name="Favey S."/>
            <person name="Labesse G."/>
            <person name="Vouille V."/>
            <person name="Boccara M."/>
        </authorList>
    </citation>
    <scope>NUCLEOTIDE SEQUENCE [GENOMIC DNA]</scope>
    <source>
        <strain>3937</strain>
    </source>
</reference>
<reference key="2">
    <citation type="journal article" date="2011" name="J. Bacteriol.">
        <title>Genome sequence of the plant-pathogenic bacterium Dickeya dadantii 3937.</title>
        <authorList>
            <person name="Glasner J.D."/>
            <person name="Yang C.H."/>
            <person name="Reverchon S."/>
            <person name="Hugouvieux-Cotte-Pattat N."/>
            <person name="Condemine G."/>
            <person name="Bohin J.P."/>
            <person name="Van Gijsegem F."/>
            <person name="Yang S."/>
            <person name="Franza T."/>
            <person name="Expert D."/>
            <person name="Plunkett G. III"/>
            <person name="San Francisco M.J."/>
            <person name="Charkowski A.O."/>
            <person name="Py B."/>
            <person name="Bell K."/>
            <person name="Rauscher L."/>
            <person name="Rodriguez-Palenzuela P."/>
            <person name="Toussaint A."/>
            <person name="Holeva M.C."/>
            <person name="He S.Y."/>
            <person name="Douet V."/>
            <person name="Boccara M."/>
            <person name="Blanco C."/>
            <person name="Toth I."/>
            <person name="Anderson B.D."/>
            <person name="Biehl B.S."/>
            <person name="Mau B."/>
            <person name="Flynn S.M."/>
            <person name="Barras F."/>
            <person name="Lindeberg M."/>
            <person name="Birch P.R."/>
            <person name="Tsuyumu S."/>
            <person name="Shi X."/>
            <person name="Hibbing M."/>
            <person name="Yap M.N."/>
            <person name="Carpentier M."/>
            <person name="Dassa E."/>
            <person name="Umehara M."/>
            <person name="Kim J.F."/>
            <person name="Rusch M."/>
            <person name="Soni P."/>
            <person name="Mayhew G.F."/>
            <person name="Fouts D.E."/>
            <person name="Gill S.R."/>
            <person name="Blattner F.R."/>
            <person name="Keen N.T."/>
            <person name="Perna N.T."/>
        </authorList>
    </citation>
    <scope>NUCLEOTIDE SEQUENCE [LARGE SCALE GENOMIC DNA]</scope>
    <source>
        <strain>3937</strain>
    </source>
</reference>